<name>RECX_ECOLC</name>
<evidence type="ECO:0000255" key="1">
    <source>
        <dbReference type="HAMAP-Rule" id="MF_01114"/>
    </source>
</evidence>
<reference key="1">
    <citation type="submission" date="2008-02" db="EMBL/GenBank/DDBJ databases">
        <title>Complete sequence of Escherichia coli C str. ATCC 8739.</title>
        <authorList>
            <person name="Copeland A."/>
            <person name="Lucas S."/>
            <person name="Lapidus A."/>
            <person name="Glavina del Rio T."/>
            <person name="Dalin E."/>
            <person name="Tice H."/>
            <person name="Bruce D."/>
            <person name="Goodwin L."/>
            <person name="Pitluck S."/>
            <person name="Kiss H."/>
            <person name="Brettin T."/>
            <person name="Detter J.C."/>
            <person name="Han C."/>
            <person name="Kuske C.R."/>
            <person name="Schmutz J."/>
            <person name="Larimer F."/>
            <person name="Land M."/>
            <person name="Hauser L."/>
            <person name="Kyrpides N."/>
            <person name="Mikhailova N."/>
            <person name="Ingram L."/>
            <person name="Richardson P."/>
        </authorList>
    </citation>
    <scope>NUCLEOTIDE SEQUENCE [LARGE SCALE GENOMIC DNA]</scope>
    <source>
        <strain>ATCC 8739 / DSM 1576 / NBRC 3972 / NCIMB 8545 / WDCM 00012 / Crooks</strain>
    </source>
</reference>
<dbReference type="EMBL" id="CP000946">
    <property type="protein sequence ID" value="ACA76683.1"/>
    <property type="molecule type" value="Genomic_DNA"/>
</dbReference>
<dbReference type="RefSeq" id="WP_000140508.1">
    <property type="nucleotide sequence ID" value="NZ_MTFT01000026.1"/>
</dbReference>
<dbReference type="SMR" id="B1IUY1"/>
<dbReference type="KEGG" id="ecl:EcolC_1014"/>
<dbReference type="HOGENOM" id="CLU_066607_3_2_6"/>
<dbReference type="GO" id="GO:0005737">
    <property type="term" value="C:cytoplasm"/>
    <property type="evidence" value="ECO:0007669"/>
    <property type="project" value="UniProtKB-SubCell"/>
</dbReference>
<dbReference type="GO" id="GO:0006282">
    <property type="term" value="P:regulation of DNA repair"/>
    <property type="evidence" value="ECO:0007669"/>
    <property type="project" value="UniProtKB-UniRule"/>
</dbReference>
<dbReference type="FunFam" id="1.10.10.10:FF:000133">
    <property type="entry name" value="Regulatory protein RecX"/>
    <property type="match status" value="1"/>
</dbReference>
<dbReference type="FunFam" id="1.10.10.10:FF:000134">
    <property type="entry name" value="Regulatory protein RecX"/>
    <property type="match status" value="1"/>
</dbReference>
<dbReference type="FunFam" id="1.10.10.10:FF:000209">
    <property type="entry name" value="Regulatory protein RecX"/>
    <property type="match status" value="1"/>
</dbReference>
<dbReference type="Gene3D" id="1.10.10.10">
    <property type="entry name" value="Winged helix-like DNA-binding domain superfamily/Winged helix DNA-binding domain"/>
    <property type="match status" value="3"/>
</dbReference>
<dbReference type="HAMAP" id="MF_01114">
    <property type="entry name" value="RecX"/>
    <property type="match status" value="1"/>
</dbReference>
<dbReference type="InterPro" id="IPR053926">
    <property type="entry name" value="RecX_HTH_1st"/>
</dbReference>
<dbReference type="InterPro" id="IPR053924">
    <property type="entry name" value="RecX_HTH_2nd"/>
</dbReference>
<dbReference type="InterPro" id="IPR053925">
    <property type="entry name" value="RecX_HTH_3rd"/>
</dbReference>
<dbReference type="InterPro" id="IPR003783">
    <property type="entry name" value="Regulatory_RecX"/>
</dbReference>
<dbReference type="InterPro" id="IPR036388">
    <property type="entry name" value="WH-like_DNA-bd_sf"/>
</dbReference>
<dbReference type="NCBIfam" id="NF001052">
    <property type="entry name" value="PRK00117.1-1"/>
    <property type="match status" value="1"/>
</dbReference>
<dbReference type="PANTHER" id="PTHR33602">
    <property type="entry name" value="REGULATORY PROTEIN RECX FAMILY PROTEIN"/>
    <property type="match status" value="1"/>
</dbReference>
<dbReference type="PANTHER" id="PTHR33602:SF1">
    <property type="entry name" value="REGULATORY PROTEIN RECX FAMILY PROTEIN"/>
    <property type="match status" value="1"/>
</dbReference>
<dbReference type="Pfam" id="PF21982">
    <property type="entry name" value="RecX_HTH1"/>
    <property type="match status" value="1"/>
</dbReference>
<dbReference type="Pfam" id="PF02631">
    <property type="entry name" value="RecX_HTH2"/>
    <property type="match status" value="1"/>
</dbReference>
<dbReference type="Pfam" id="PF21981">
    <property type="entry name" value="RecX_HTH3"/>
    <property type="match status" value="1"/>
</dbReference>
<accession>B1IUY1</accession>
<comment type="function">
    <text evidence="1">Modulates RecA activity.</text>
</comment>
<comment type="subcellular location">
    <subcellularLocation>
        <location evidence="1">Cytoplasm</location>
    </subcellularLocation>
</comment>
<comment type="similarity">
    <text evidence="1">Belongs to the RecX family.</text>
</comment>
<protein>
    <recommendedName>
        <fullName evidence="1">Regulatory protein RecX</fullName>
    </recommendedName>
</protein>
<proteinExistence type="inferred from homology"/>
<keyword id="KW-0963">Cytoplasm</keyword>
<organism>
    <name type="scientific">Escherichia coli (strain ATCC 8739 / DSM 1576 / NBRC 3972 / NCIMB 8545 / WDCM 00012 / Crooks)</name>
    <dbReference type="NCBI Taxonomy" id="481805"/>
    <lineage>
        <taxon>Bacteria</taxon>
        <taxon>Pseudomonadati</taxon>
        <taxon>Pseudomonadota</taxon>
        <taxon>Gammaproteobacteria</taxon>
        <taxon>Enterobacterales</taxon>
        <taxon>Enterobacteriaceae</taxon>
        <taxon>Escherichia</taxon>
    </lineage>
</organism>
<sequence length="166" mass="19424">MTESTSRRPAYARLLDRAVRILAVRDHSEQELRRKLAAPIMGKNGPEEIDATAEDYERVIAWCHEHGYLDDSRFVARFIASRSRKGYGPARIRQELNQKGISREATEKAMRECDIDWCALARDQATRKYGEPLPTVFSEKVKIQRFLLYRGYLMEDIQEIWRNFAD</sequence>
<gene>
    <name evidence="1" type="primary">recX</name>
    <name type="ordered locus">EcolC_1014</name>
</gene>
<feature type="chain" id="PRO_1000084979" description="Regulatory protein RecX">
    <location>
        <begin position="1"/>
        <end position="166"/>
    </location>
</feature>